<feature type="chain" id="PRO_1000123313" description="Phosphopantetheine adenylyltransferase">
    <location>
        <begin position="1"/>
        <end position="162"/>
    </location>
</feature>
<feature type="binding site" evidence="1">
    <location>
        <begin position="9"/>
        <end position="10"/>
    </location>
    <ligand>
        <name>ATP</name>
        <dbReference type="ChEBI" id="CHEBI:30616"/>
    </ligand>
</feature>
<feature type="binding site" evidence="1">
    <location>
        <position position="9"/>
    </location>
    <ligand>
        <name>substrate</name>
    </ligand>
</feature>
<feature type="binding site" evidence="1">
    <location>
        <position position="17"/>
    </location>
    <ligand>
        <name>ATP</name>
        <dbReference type="ChEBI" id="CHEBI:30616"/>
    </ligand>
</feature>
<feature type="binding site" evidence="1">
    <location>
        <position position="41"/>
    </location>
    <ligand>
        <name>substrate</name>
    </ligand>
</feature>
<feature type="binding site" evidence="1">
    <location>
        <position position="73"/>
    </location>
    <ligand>
        <name>substrate</name>
    </ligand>
</feature>
<feature type="binding site" evidence="1">
    <location>
        <position position="87"/>
    </location>
    <ligand>
        <name>substrate</name>
    </ligand>
</feature>
<feature type="binding site" evidence="1">
    <location>
        <begin position="88"/>
        <end position="90"/>
    </location>
    <ligand>
        <name>ATP</name>
        <dbReference type="ChEBI" id="CHEBI:30616"/>
    </ligand>
</feature>
<feature type="binding site" evidence="1">
    <location>
        <position position="98"/>
    </location>
    <ligand>
        <name>ATP</name>
        <dbReference type="ChEBI" id="CHEBI:30616"/>
    </ligand>
</feature>
<feature type="binding site" evidence="1">
    <location>
        <begin position="123"/>
        <end position="129"/>
    </location>
    <ligand>
        <name>ATP</name>
        <dbReference type="ChEBI" id="CHEBI:30616"/>
    </ligand>
</feature>
<feature type="site" description="Transition state stabilizer" evidence="1">
    <location>
        <position position="17"/>
    </location>
</feature>
<reference key="1">
    <citation type="submission" date="2009-02" db="EMBL/GenBank/DDBJ databases">
        <title>Vibrio splendidus str. LGP32 complete genome.</title>
        <authorList>
            <person name="Mazel D."/>
            <person name="Le Roux F."/>
        </authorList>
    </citation>
    <scope>NUCLEOTIDE SEQUENCE [LARGE SCALE GENOMIC DNA]</scope>
    <source>
        <strain>LGP32</strain>
    </source>
</reference>
<sequence>MKIAIYPGTFDPVTNGHYDLIKRAACMFEKLVIGVAESPSKATLFSLDERVALLRETCYELPNVSVEGFSGLLVDFATEQNASILVRGLRTTMDFEYEFGLTTMYRRLKPELESLFLTPSEEFAFLSSTLVREVAIHGGEIEQFVPGCVHQAVVAKVKAFKN</sequence>
<evidence type="ECO:0000255" key="1">
    <source>
        <dbReference type="HAMAP-Rule" id="MF_00151"/>
    </source>
</evidence>
<name>COAD_VIBA3</name>
<proteinExistence type="inferred from homology"/>
<organism>
    <name type="scientific">Vibrio atlanticus (strain LGP32)</name>
    <name type="common">Vibrio splendidus (strain Mel32)</name>
    <dbReference type="NCBI Taxonomy" id="575788"/>
    <lineage>
        <taxon>Bacteria</taxon>
        <taxon>Pseudomonadati</taxon>
        <taxon>Pseudomonadota</taxon>
        <taxon>Gammaproteobacteria</taxon>
        <taxon>Vibrionales</taxon>
        <taxon>Vibrionaceae</taxon>
        <taxon>Vibrio</taxon>
    </lineage>
</organism>
<protein>
    <recommendedName>
        <fullName evidence="1">Phosphopantetheine adenylyltransferase</fullName>
        <ecNumber evidence="1">2.7.7.3</ecNumber>
    </recommendedName>
    <alternativeName>
        <fullName evidence="1">Dephospho-CoA pyrophosphorylase</fullName>
    </alternativeName>
    <alternativeName>
        <fullName evidence="1">Pantetheine-phosphate adenylyltransferase</fullName>
        <shortName evidence="1">PPAT</shortName>
    </alternativeName>
</protein>
<keyword id="KW-0067">ATP-binding</keyword>
<keyword id="KW-0173">Coenzyme A biosynthesis</keyword>
<keyword id="KW-0963">Cytoplasm</keyword>
<keyword id="KW-0460">Magnesium</keyword>
<keyword id="KW-0547">Nucleotide-binding</keyword>
<keyword id="KW-0548">Nucleotidyltransferase</keyword>
<keyword id="KW-0808">Transferase</keyword>
<comment type="function">
    <text evidence="1">Reversibly transfers an adenylyl group from ATP to 4'-phosphopantetheine, yielding dephospho-CoA (dPCoA) and pyrophosphate.</text>
</comment>
<comment type="catalytic activity">
    <reaction evidence="1">
        <text>(R)-4'-phosphopantetheine + ATP + H(+) = 3'-dephospho-CoA + diphosphate</text>
        <dbReference type="Rhea" id="RHEA:19801"/>
        <dbReference type="ChEBI" id="CHEBI:15378"/>
        <dbReference type="ChEBI" id="CHEBI:30616"/>
        <dbReference type="ChEBI" id="CHEBI:33019"/>
        <dbReference type="ChEBI" id="CHEBI:57328"/>
        <dbReference type="ChEBI" id="CHEBI:61723"/>
        <dbReference type="EC" id="2.7.7.3"/>
    </reaction>
</comment>
<comment type="cofactor">
    <cofactor evidence="1">
        <name>Mg(2+)</name>
        <dbReference type="ChEBI" id="CHEBI:18420"/>
    </cofactor>
</comment>
<comment type="pathway">
    <text evidence="1">Cofactor biosynthesis; coenzyme A biosynthesis; CoA from (R)-pantothenate: step 4/5.</text>
</comment>
<comment type="subunit">
    <text evidence="1">Homohexamer.</text>
</comment>
<comment type="subcellular location">
    <subcellularLocation>
        <location evidence="1">Cytoplasm</location>
    </subcellularLocation>
</comment>
<comment type="similarity">
    <text evidence="1">Belongs to the bacterial CoaD family.</text>
</comment>
<gene>
    <name evidence="1" type="primary">coaD</name>
    <name type="ordered locus">VS_0195</name>
</gene>
<accession>B7VHL5</accession>
<dbReference type="EC" id="2.7.7.3" evidence="1"/>
<dbReference type="EMBL" id="FM954972">
    <property type="protein sequence ID" value="CAV17227.1"/>
    <property type="molecule type" value="Genomic_DNA"/>
</dbReference>
<dbReference type="SMR" id="B7VHL5"/>
<dbReference type="STRING" id="575788.VS_0195"/>
<dbReference type="KEGG" id="vsp:VS_0195"/>
<dbReference type="PATRIC" id="fig|575788.5.peg.1583"/>
<dbReference type="eggNOG" id="COG0669">
    <property type="taxonomic scope" value="Bacteria"/>
</dbReference>
<dbReference type="HOGENOM" id="CLU_100149_0_1_6"/>
<dbReference type="UniPathway" id="UPA00241">
    <property type="reaction ID" value="UER00355"/>
</dbReference>
<dbReference type="Proteomes" id="UP000009100">
    <property type="component" value="Chromosome 1"/>
</dbReference>
<dbReference type="GO" id="GO:0005737">
    <property type="term" value="C:cytoplasm"/>
    <property type="evidence" value="ECO:0007669"/>
    <property type="project" value="UniProtKB-SubCell"/>
</dbReference>
<dbReference type="GO" id="GO:0005524">
    <property type="term" value="F:ATP binding"/>
    <property type="evidence" value="ECO:0007669"/>
    <property type="project" value="UniProtKB-KW"/>
</dbReference>
<dbReference type="GO" id="GO:0004595">
    <property type="term" value="F:pantetheine-phosphate adenylyltransferase activity"/>
    <property type="evidence" value="ECO:0007669"/>
    <property type="project" value="UniProtKB-UniRule"/>
</dbReference>
<dbReference type="GO" id="GO:0015937">
    <property type="term" value="P:coenzyme A biosynthetic process"/>
    <property type="evidence" value="ECO:0007669"/>
    <property type="project" value="UniProtKB-UniRule"/>
</dbReference>
<dbReference type="CDD" id="cd02163">
    <property type="entry name" value="PPAT"/>
    <property type="match status" value="1"/>
</dbReference>
<dbReference type="Gene3D" id="3.40.50.620">
    <property type="entry name" value="HUPs"/>
    <property type="match status" value="1"/>
</dbReference>
<dbReference type="HAMAP" id="MF_00151">
    <property type="entry name" value="PPAT_bact"/>
    <property type="match status" value="1"/>
</dbReference>
<dbReference type="InterPro" id="IPR004821">
    <property type="entry name" value="Cyt_trans-like"/>
</dbReference>
<dbReference type="InterPro" id="IPR001980">
    <property type="entry name" value="PPAT"/>
</dbReference>
<dbReference type="InterPro" id="IPR014729">
    <property type="entry name" value="Rossmann-like_a/b/a_fold"/>
</dbReference>
<dbReference type="NCBIfam" id="TIGR01510">
    <property type="entry name" value="coaD_prev_kdtB"/>
    <property type="match status" value="1"/>
</dbReference>
<dbReference type="NCBIfam" id="TIGR00125">
    <property type="entry name" value="cyt_tran_rel"/>
    <property type="match status" value="1"/>
</dbReference>
<dbReference type="PANTHER" id="PTHR21342">
    <property type="entry name" value="PHOSPHOPANTETHEINE ADENYLYLTRANSFERASE"/>
    <property type="match status" value="1"/>
</dbReference>
<dbReference type="PANTHER" id="PTHR21342:SF1">
    <property type="entry name" value="PHOSPHOPANTETHEINE ADENYLYLTRANSFERASE"/>
    <property type="match status" value="1"/>
</dbReference>
<dbReference type="Pfam" id="PF01467">
    <property type="entry name" value="CTP_transf_like"/>
    <property type="match status" value="1"/>
</dbReference>
<dbReference type="PRINTS" id="PR01020">
    <property type="entry name" value="LPSBIOSNTHSS"/>
</dbReference>
<dbReference type="SUPFAM" id="SSF52374">
    <property type="entry name" value="Nucleotidylyl transferase"/>
    <property type="match status" value="1"/>
</dbReference>